<dbReference type="EC" id="3.4.21.10"/>
<dbReference type="PIR" id="S02175">
    <property type="entry name" value="S02175"/>
</dbReference>
<dbReference type="PIR" id="S02176">
    <property type="entry name" value="S02176"/>
</dbReference>
<dbReference type="STRING" id="9925.ENSCHIP00000027035"/>
<dbReference type="MEROPS" id="S01.223"/>
<dbReference type="GlyCosmos" id="P10626">
    <property type="glycosylation" value="1 site, No reported glycans"/>
</dbReference>
<dbReference type="Proteomes" id="UP000291000">
    <property type="component" value="Unassembled WGS sequence"/>
</dbReference>
<dbReference type="Proteomes" id="UP000694566">
    <property type="component" value="Unplaced"/>
</dbReference>
<dbReference type="GO" id="GO:0001669">
    <property type="term" value="C:acrosomal vesicle"/>
    <property type="evidence" value="ECO:0000314"/>
    <property type="project" value="CAFA"/>
</dbReference>
<dbReference type="GO" id="GO:0004040">
    <property type="term" value="F:amidase activity"/>
    <property type="evidence" value="ECO:0000250"/>
    <property type="project" value="UniProtKB"/>
</dbReference>
<dbReference type="GO" id="GO:0005537">
    <property type="term" value="F:D-mannose binding"/>
    <property type="evidence" value="ECO:0000250"/>
    <property type="project" value="UniProtKB"/>
</dbReference>
<dbReference type="GO" id="GO:0042806">
    <property type="term" value="F:fucose binding"/>
    <property type="evidence" value="ECO:0000250"/>
    <property type="project" value="UniProtKB"/>
</dbReference>
<dbReference type="GO" id="GO:0004252">
    <property type="term" value="F:serine-type endopeptidase activity"/>
    <property type="evidence" value="ECO:0000314"/>
    <property type="project" value="UniProtKB"/>
</dbReference>
<dbReference type="GO" id="GO:0008236">
    <property type="term" value="F:serine-type peptidase activity"/>
    <property type="evidence" value="ECO:0000250"/>
    <property type="project" value="UniProtKB"/>
</dbReference>
<dbReference type="GO" id="GO:0007340">
    <property type="term" value="P:acrosome reaction"/>
    <property type="evidence" value="ECO:0000250"/>
    <property type="project" value="UniProtKB"/>
</dbReference>
<dbReference type="GO" id="GO:0007190">
    <property type="term" value="P:activation of adenylate cyclase activity"/>
    <property type="evidence" value="ECO:0000250"/>
    <property type="project" value="UniProtKB"/>
</dbReference>
<dbReference type="GO" id="GO:0006508">
    <property type="term" value="P:proteolysis"/>
    <property type="evidence" value="ECO:0007669"/>
    <property type="project" value="UniProtKB-KW"/>
</dbReference>
<dbReference type="GO" id="GO:0007338">
    <property type="term" value="P:single fertilization"/>
    <property type="evidence" value="ECO:0000250"/>
    <property type="project" value="UniProtKB"/>
</dbReference>
<dbReference type="Gene3D" id="2.40.10.10">
    <property type="entry name" value="Trypsin-like serine proteases"/>
    <property type="match status" value="2"/>
</dbReference>
<dbReference type="InterPro" id="IPR009003">
    <property type="entry name" value="Peptidase_S1_PA"/>
</dbReference>
<dbReference type="InterPro" id="IPR043504">
    <property type="entry name" value="Peptidase_S1_PA_chymotrypsin"/>
</dbReference>
<dbReference type="InterPro" id="IPR001254">
    <property type="entry name" value="Trypsin_dom"/>
</dbReference>
<dbReference type="PANTHER" id="PTHR24252:SF8">
    <property type="entry name" value="ACROSIN"/>
    <property type="match status" value="1"/>
</dbReference>
<dbReference type="PANTHER" id="PTHR24252">
    <property type="entry name" value="ACROSIN-RELATED"/>
    <property type="match status" value="1"/>
</dbReference>
<dbReference type="Pfam" id="PF00089">
    <property type="entry name" value="Trypsin"/>
    <property type="match status" value="1"/>
</dbReference>
<dbReference type="SUPFAM" id="SSF50494">
    <property type="entry name" value="Trypsin-like serine proteases"/>
    <property type="match status" value="1"/>
</dbReference>
<protein>
    <recommendedName>
        <fullName>Acrosin</fullName>
        <ecNumber>3.4.21.10</ecNumber>
    </recommendedName>
    <component>
        <recommendedName>
            <fullName>Acrosin light chain</fullName>
        </recommendedName>
    </component>
    <component>
        <recommendedName>
            <fullName>Acrosin heavy chain</fullName>
        </recommendedName>
    </component>
</protein>
<proteinExistence type="evidence at protein level"/>
<feature type="chain" id="PRO_0000027516" description="Acrosin light chain">
    <location>
        <begin position="1"/>
        <end position="23"/>
    </location>
</feature>
<feature type="chain" id="PRO_0000027517" description="Acrosin heavy chain">
    <location>
        <begin position="24"/>
        <end position="60" status="greater than"/>
    </location>
</feature>
<feature type="domain" description="Peptidase S1" evidence="2">
    <location>
        <begin position="24"/>
        <end position="60" status="greater than"/>
    </location>
</feature>
<feature type="glycosylation site" description="N-linked (GlcNAc...) asparagine">
    <location>
        <position position="3"/>
    </location>
</feature>
<feature type="disulfide bond" description="Interchain (with heavy chain)" evidence="3">
    <location>
        <position position="6"/>
    </location>
</feature>
<feature type="disulfide bond" description="Interchain (with heavy chain)" evidence="3">
    <location>
        <position position="10"/>
    </location>
</feature>
<feature type="non-terminal residue">
    <location>
        <position position="60"/>
    </location>
</feature>
<gene>
    <name type="primary">ACR</name>
</gene>
<keyword id="KW-0903">Direct protein sequencing</keyword>
<keyword id="KW-1015">Disulfide bond</keyword>
<keyword id="KW-0325">Glycoprotein</keyword>
<keyword id="KW-0378">Hydrolase</keyword>
<keyword id="KW-0645">Protease</keyword>
<keyword id="KW-1185">Reference proteome</keyword>
<keyword id="KW-0720">Serine protease</keyword>
<keyword id="KW-0865">Zymogen</keyword>
<comment type="function">
    <text>Acrosin is the major protease of mammalian spermatozoa. It is a serine protease of trypsin-like cleavage specificity, it is synthesized in a zymogen form, proacrosin and stored in the acrosome.</text>
</comment>
<comment type="catalytic activity">
    <reaction>
        <text>Preferential cleavage: Arg-|-Xaa, Lys-|-Xaa.</text>
        <dbReference type="EC" id="3.4.21.10"/>
    </reaction>
</comment>
<comment type="activity regulation">
    <text evidence="1">Inhibited by SERPINA5.</text>
</comment>
<comment type="subunit">
    <text evidence="1">Heavy chain (catalytic) and a light chain linked by two disulfide bonds. Forms a heterodimer with SERPINA5 (By similarity).</text>
</comment>
<comment type="miscellaneous">
    <text>X's in position 19 to 22 were introduced by homology with the pig sequence.</text>
</comment>
<comment type="similarity">
    <text evidence="2">Belongs to the peptidase S1 family.</text>
</comment>
<name>ACRO_CAPHI</name>
<evidence type="ECO:0000250" key="1"/>
<evidence type="ECO:0000255" key="2">
    <source>
        <dbReference type="PROSITE-ProRule" id="PRU00274"/>
    </source>
</evidence>
<evidence type="ECO:0000305" key="3"/>
<accession>P10626</accession>
<organism>
    <name type="scientific">Capra hircus</name>
    <name type="common">Goat</name>
    <dbReference type="NCBI Taxonomy" id="9925"/>
    <lineage>
        <taxon>Eukaryota</taxon>
        <taxon>Metazoa</taxon>
        <taxon>Chordata</taxon>
        <taxon>Craniata</taxon>
        <taxon>Vertebrata</taxon>
        <taxon>Euteleostomi</taxon>
        <taxon>Mammalia</taxon>
        <taxon>Eutheria</taxon>
        <taxon>Laurasiatheria</taxon>
        <taxon>Artiodactyla</taxon>
        <taxon>Ruminantia</taxon>
        <taxon>Pecora</taxon>
        <taxon>Bovidae</taxon>
        <taxon>Caprinae</taxon>
        <taxon>Capra</taxon>
    </lineage>
</organism>
<reference key="1">
    <citation type="journal article" date="1989" name="Biochem. J.">
        <title>Caprine acrosin. Purification, characterization and proteolysis of the porcine zona pellucida.</title>
        <authorList>
            <person name="Hardy D.M."/>
            <person name="Schoots A.F.M."/>
            <person name="Hedrick J.L."/>
        </authorList>
    </citation>
    <scope>PROTEIN SEQUENCE</scope>
    <source>
        <tissue>Sperm</tissue>
    </source>
</reference>
<sequence>RDNTTCDGPCGIRFRQNRXXXXRIIGGQDAAHGSWPWMVSLQIFTYHNNRRYHVCGGSLL</sequence>